<proteinExistence type="inferred from homology"/>
<dbReference type="EC" id="6.1.1.10" evidence="1"/>
<dbReference type="EMBL" id="CP000057">
    <property type="protein sequence ID" value="AAX88652.1"/>
    <property type="molecule type" value="Genomic_DNA"/>
</dbReference>
<dbReference type="RefSeq" id="WP_011272692.1">
    <property type="nucleotide sequence ID" value="NC_007146.2"/>
</dbReference>
<dbReference type="SMR" id="Q4QJZ5"/>
<dbReference type="KEGG" id="hit:NTHI1894"/>
<dbReference type="HOGENOM" id="CLU_009710_7_0_6"/>
<dbReference type="Proteomes" id="UP000002525">
    <property type="component" value="Chromosome"/>
</dbReference>
<dbReference type="GO" id="GO:0005829">
    <property type="term" value="C:cytosol"/>
    <property type="evidence" value="ECO:0007669"/>
    <property type="project" value="TreeGrafter"/>
</dbReference>
<dbReference type="GO" id="GO:0005524">
    <property type="term" value="F:ATP binding"/>
    <property type="evidence" value="ECO:0007669"/>
    <property type="project" value="UniProtKB-UniRule"/>
</dbReference>
<dbReference type="GO" id="GO:0046872">
    <property type="term" value="F:metal ion binding"/>
    <property type="evidence" value="ECO:0007669"/>
    <property type="project" value="UniProtKB-KW"/>
</dbReference>
<dbReference type="GO" id="GO:0004825">
    <property type="term" value="F:methionine-tRNA ligase activity"/>
    <property type="evidence" value="ECO:0007669"/>
    <property type="project" value="UniProtKB-UniRule"/>
</dbReference>
<dbReference type="GO" id="GO:0000049">
    <property type="term" value="F:tRNA binding"/>
    <property type="evidence" value="ECO:0007669"/>
    <property type="project" value="UniProtKB-KW"/>
</dbReference>
<dbReference type="GO" id="GO:0006431">
    <property type="term" value="P:methionyl-tRNA aminoacylation"/>
    <property type="evidence" value="ECO:0007669"/>
    <property type="project" value="UniProtKB-UniRule"/>
</dbReference>
<dbReference type="CDD" id="cd07957">
    <property type="entry name" value="Anticodon_Ia_Met"/>
    <property type="match status" value="1"/>
</dbReference>
<dbReference type="CDD" id="cd00814">
    <property type="entry name" value="MetRS_core"/>
    <property type="match status" value="1"/>
</dbReference>
<dbReference type="CDD" id="cd02800">
    <property type="entry name" value="tRNA_bind_EcMetRS_like"/>
    <property type="match status" value="1"/>
</dbReference>
<dbReference type="FunFam" id="1.10.730.10:FF:000005">
    <property type="entry name" value="Methionine--tRNA ligase"/>
    <property type="match status" value="1"/>
</dbReference>
<dbReference type="FunFam" id="2.20.28.20:FF:000001">
    <property type="entry name" value="Methionine--tRNA ligase"/>
    <property type="match status" value="1"/>
</dbReference>
<dbReference type="FunFam" id="2.40.50.140:FF:000042">
    <property type="entry name" value="Methionine--tRNA ligase"/>
    <property type="match status" value="1"/>
</dbReference>
<dbReference type="Gene3D" id="3.40.50.620">
    <property type="entry name" value="HUPs"/>
    <property type="match status" value="1"/>
</dbReference>
<dbReference type="Gene3D" id="1.10.730.10">
    <property type="entry name" value="Isoleucyl-tRNA Synthetase, Domain 1"/>
    <property type="match status" value="1"/>
</dbReference>
<dbReference type="Gene3D" id="2.20.28.20">
    <property type="entry name" value="Methionyl-tRNA synthetase, Zn-domain"/>
    <property type="match status" value="1"/>
</dbReference>
<dbReference type="Gene3D" id="2.40.50.140">
    <property type="entry name" value="Nucleic acid-binding proteins"/>
    <property type="match status" value="1"/>
</dbReference>
<dbReference type="HAMAP" id="MF_00098">
    <property type="entry name" value="Met_tRNA_synth_type1"/>
    <property type="match status" value="1"/>
</dbReference>
<dbReference type="InterPro" id="IPR001412">
    <property type="entry name" value="aa-tRNA-synth_I_CS"/>
</dbReference>
<dbReference type="InterPro" id="IPR041872">
    <property type="entry name" value="Anticodon_Met"/>
</dbReference>
<dbReference type="InterPro" id="IPR004495">
    <property type="entry name" value="Met-tRNA-synth_bsu_C"/>
</dbReference>
<dbReference type="InterPro" id="IPR023458">
    <property type="entry name" value="Met-tRNA_ligase_1"/>
</dbReference>
<dbReference type="InterPro" id="IPR014758">
    <property type="entry name" value="Met-tRNA_synth"/>
</dbReference>
<dbReference type="InterPro" id="IPR015413">
    <property type="entry name" value="Methionyl/Leucyl_tRNA_Synth"/>
</dbReference>
<dbReference type="InterPro" id="IPR033911">
    <property type="entry name" value="MetRS_core"/>
</dbReference>
<dbReference type="InterPro" id="IPR029038">
    <property type="entry name" value="MetRS_Zn"/>
</dbReference>
<dbReference type="InterPro" id="IPR012340">
    <property type="entry name" value="NA-bd_OB-fold"/>
</dbReference>
<dbReference type="InterPro" id="IPR014729">
    <property type="entry name" value="Rossmann-like_a/b/a_fold"/>
</dbReference>
<dbReference type="InterPro" id="IPR002547">
    <property type="entry name" value="tRNA-bd_dom"/>
</dbReference>
<dbReference type="InterPro" id="IPR009080">
    <property type="entry name" value="tRNAsynth_Ia_anticodon-bd"/>
</dbReference>
<dbReference type="NCBIfam" id="TIGR00398">
    <property type="entry name" value="metG"/>
    <property type="match status" value="1"/>
</dbReference>
<dbReference type="NCBIfam" id="TIGR00399">
    <property type="entry name" value="metG_C_term"/>
    <property type="match status" value="1"/>
</dbReference>
<dbReference type="NCBIfam" id="NF001100">
    <property type="entry name" value="PRK00133.1"/>
    <property type="match status" value="1"/>
</dbReference>
<dbReference type="PANTHER" id="PTHR45765">
    <property type="entry name" value="METHIONINE--TRNA LIGASE"/>
    <property type="match status" value="1"/>
</dbReference>
<dbReference type="PANTHER" id="PTHR45765:SF1">
    <property type="entry name" value="METHIONINE--TRNA LIGASE, CYTOPLASMIC"/>
    <property type="match status" value="1"/>
</dbReference>
<dbReference type="Pfam" id="PF19303">
    <property type="entry name" value="Anticodon_3"/>
    <property type="match status" value="1"/>
</dbReference>
<dbReference type="Pfam" id="PF09334">
    <property type="entry name" value="tRNA-synt_1g"/>
    <property type="match status" value="1"/>
</dbReference>
<dbReference type="Pfam" id="PF01588">
    <property type="entry name" value="tRNA_bind"/>
    <property type="match status" value="1"/>
</dbReference>
<dbReference type="PRINTS" id="PR01041">
    <property type="entry name" value="TRNASYNTHMET"/>
</dbReference>
<dbReference type="SUPFAM" id="SSF47323">
    <property type="entry name" value="Anticodon-binding domain of a subclass of class I aminoacyl-tRNA synthetases"/>
    <property type="match status" value="1"/>
</dbReference>
<dbReference type="SUPFAM" id="SSF57770">
    <property type="entry name" value="Methionyl-tRNA synthetase (MetRS), Zn-domain"/>
    <property type="match status" value="1"/>
</dbReference>
<dbReference type="SUPFAM" id="SSF50249">
    <property type="entry name" value="Nucleic acid-binding proteins"/>
    <property type="match status" value="1"/>
</dbReference>
<dbReference type="SUPFAM" id="SSF52374">
    <property type="entry name" value="Nucleotidylyl transferase"/>
    <property type="match status" value="1"/>
</dbReference>
<dbReference type="PROSITE" id="PS00178">
    <property type="entry name" value="AA_TRNA_LIGASE_I"/>
    <property type="match status" value="1"/>
</dbReference>
<dbReference type="PROSITE" id="PS50886">
    <property type="entry name" value="TRBD"/>
    <property type="match status" value="1"/>
</dbReference>
<reference key="1">
    <citation type="journal article" date="2005" name="J. Bacteriol.">
        <title>Genomic sequence of an otitis media isolate of nontypeable Haemophilus influenzae: comparative study with H. influenzae serotype d, strain KW20.</title>
        <authorList>
            <person name="Harrison A."/>
            <person name="Dyer D.W."/>
            <person name="Gillaspy A."/>
            <person name="Ray W.C."/>
            <person name="Mungur R."/>
            <person name="Carson M.B."/>
            <person name="Zhong H."/>
            <person name="Gipson J."/>
            <person name="Gipson M."/>
            <person name="Johnson L.S."/>
            <person name="Lewis L."/>
            <person name="Bakaletz L.O."/>
            <person name="Munson R.S. Jr."/>
        </authorList>
    </citation>
    <scope>NUCLEOTIDE SEQUENCE [LARGE SCALE GENOMIC DNA]</scope>
    <source>
        <strain>86-028NP</strain>
    </source>
</reference>
<accession>Q4QJZ5</accession>
<organism>
    <name type="scientific">Haemophilus influenzae (strain 86-028NP)</name>
    <dbReference type="NCBI Taxonomy" id="281310"/>
    <lineage>
        <taxon>Bacteria</taxon>
        <taxon>Pseudomonadati</taxon>
        <taxon>Pseudomonadota</taxon>
        <taxon>Gammaproteobacteria</taxon>
        <taxon>Pasteurellales</taxon>
        <taxon>Pasteurellaceae</taxon>
        <taxon>Haemophilus</taxon>
    </lineage>
</organism>
<evidence type="ECO:0000255" key="1">
    <source>
        <dbReference type="HAMAP-Rule" id="MF_00098"/>
    </source>
</evidence>
<comment type="function">
    <text evidence="1">Is required not only for elongation of protein synthesis but also for the initiation of all mRNA translation through initiator tRNA(fMet) aminoacylation.</text>
</comment>
<comment type="catalytic activity">
    <reaction evidence="1">
        <text>tRNA(Met) + L-methionine + ATP = L-methionyl-tRNA(Met) + AMP + diphosphate</text>
        <dbReference type="Rhea" id="RHEA:13481"/>
        <dbReference type="Rhea" id="RHEA-COMP:9667"/>
        <dbReference type="Rhea" id="RHEA-COMP:9698"/>
        <dbReference type="ChEBI" id="CHEBI:30616"/>
        <dbReference type="ChEBI" id="CHEBI:33019"/>
        <dbReference type="ChEBI" id="CHEBI:57844"/>
        <dbReference type="ChEBI" id="CHEBI:78442"/>
        <dbReference type="ChEBI" id="CHEBI:78530"/>
        <dbReference type="ChEBI" id="CHEBI:456215"/>
        <dbReference type="EC" id="6.1.1.10"/>
    </reaction>
</comment>
<comment type="cofactor">
    <cofactor evidence="1">
        <name>Zn(2+)</name>
        <dbReference type="ChEBI" id="CHEBI:29105"/>
    </cofactor>
    <text evidence="1">Binds 1 zinc ion per subunit.</text>
</comment>
<comment type="subunit">
    <text evidence="1">Homodimer.</text>
</comment>
<comment type="subcellular location">
    <subcellularLocation>
        <location evidence="1">Cytoplasm</location>
    </subcellularLocation>
</comment>
<comment type="similarity">
    <text evidence="1">Belongs to the class-I aminoacyl-tRNA synthetase family. MetG type 1 subfamily.</text>
</comment>
<keyword id="KW-0030">Aminoacyl-tRNA synthetase</keyword>
<keyword id="KW-0067">ATP-binding</keyword>
<keyword id="KW-0963">Cytoplasm</keyword>
<keyword id="KW-0436">Ligase</keyword>
<keyword id="KW-0479">Metal-binding</keyword>
<keyword id="KW-0547">Nucleotide-binding</keyword>
<keyword id="KW-0648">Protein biosynthesis</keyword>
<keyword id="KW-0694">RNA-binding</keyword>
<keyword id="KW-0820">tRNA-binding</keyword>
<keyword id="KW-0862">Zinc</keyword>
<gene>
    <name evidence="1" type="primary">metG</name>
    <name type="ordered locus">NTHI1894</name>
</gene>
<name>SYM_HAEI8</name>
<protein>
    <recommendedName>
        <fullName evidence="1">Methionine--tRNA ligase</fullName>
        <ecNumber evidence="1">6.1.1.10</ecNumber>
    </recommendedName>
    <alternativeName>
        <fullName evidence="1">Methionyl-tRNA synthetase</fullName>
        <shortName evidence="1">MetRS</shortName>
    </alternativeName>
</protein>
<feature type="chain" id="PRO_0000331832" description="Methionine--tRNA ligase">
    <location>
        <begin position="1"/>
        <end position="682"/>
    </location>
</feature>
<feature type="domain" description="tRNA-binding" evidence="1">
    <location>
        <begin position="580"/>
        <end position="682"/>
    </location>
</feature>
<feature type="short sequence motif" description="'HIGH' region">
    <location>
        <begin position="15"/>
        <end position="25"/>
    </location>
</feature>
<feature type="short sequence motif" description="'KMSKS' region">
    <location>
        <begin position="331"/>
        <end position="335"/>
    </location>
</feature>
<feature type="binding site" evidence="1">
    <location>
        <position position="146"/>
    </location>
    <ligand>
        <name>Zn(2+)</name>
        <dbReference type="ChEBI" id="CHEBI:29105"/>
    </ligand>
</feature>
<feature type="binding site" evidence="1">
    <location>
        <position position="149"/>
    </location>
    <ligand>
        <name>Zn(2+)</name>
        <dbReference type="ChEBI" id="CHEBI:29105"/>
    </ligand>
</feature>
<feature type="binding site" evidence="1">
    <location>
        <position position="159"/>
    </location>
    <ligand>
        <name>Zn(2+)</name>
        <dbReference type="ChEBI" id="CHEBI:29105"/>
    </ligand>
</feature>
<feature type="binding site" evidence="1">
    <location>
        <position position="162"/>
    </location>
    <ligand>
        <name>Zn(2+)</name>
        <dbReference type="ChEBI" id="CHEBI:29105"/>
    </ligand>
</feature>
<feature type="binding site" evidence="1">
    <location>
        <position position="334"/>
    </location>
    <ligand>
        <name>ATP</name>
        <dbReference type="ChEBI" id="CHEBI:30616"/>
    </ligand>
</feature>
<sequence length="682" mass="76913">MTTQPRKILVTCALPYANGAIHLGHMLEHIQADIWVRFQRMRGNKIHFVCADDAHGTPIMLNADKLGITPEELIAKAKADHIRDFAGFNISFDNYHSTHSEENKQLTAEIYNKLKANGFIKSKVISQLFDPEKNMFLPDRFVKGTCPKCKAEDQYGDNCEVCASTYSPMDLINPRSAVSGTTPIVKESEHFFFDLPAFEGMLKEWTRSGSLQSEIANKMQEWFESGLQQWDISRDAPYFGFEIPGAKDKFFYVWLDAPIGYMASFKNLCEREGIDFNEFWAEGSDAELYHFIGKDIVYFHSLFWPAMLEGSGYRKPTNVFAHGYVTVDGAKMSKSRGTFIQASTYLNHIDPECLRYYYAAKLNDRIEDLDFNLEDFVQRVNTDIVNKLVNLASRNAGFIAKRFEGKLSDKLEDEALFAEFTAQAEQIAAYYESREYNKAIREIMALTDKANKYIDEKAPWVIAKEEGKEAELQAVCSMGIELFRVLMSYLKPVLPKLAERAEAFLQAELRWDNIHQPLLGHTLAPFKALFSRLEKKQIDAVVEETKALFAAANKAAEKTEAKPTALSAVKPIAETITIDDLAKLDMRVAKVLKCEAVPESNKLLRFELDLGDHTRQVFSGIKAAYNKPEELEGRFVIMVANLAPRQMKFGVSEGMILSAGTGGSDLFLLSADNGVTAGMQVK</sequence>